<name>VP35_MABVO</name>
<accession>Q6UY68</accession>
<accession>O36425</accession>
<organismHost>
    <name type="scientific">Chlorocebus aethiops</name>
    <name type="common">Green monkey</name>
    <name type="synonym">Cercopithecus aethiops</name>
    <dbReference type="NCBI Taxonomy" id="9534"/>
</organismHost>
<organismHost>
    <name type="scientific">Homo sapiens</name>
    <name type="common">Human</name>
    <dbReference type="NCBI Taxonomy" id="9606"/>
</organismHost>
<organismHost>
    <name type="scientific">Rousettus aegyptiacus</name>
    <name type="common">Egyptian fruit bat</name>
    <name type="synonym">Pteropus aegyptiacus</name>
    <dbReference type="NCBI Taxonomy" id="9407"/>
</organismHost>
<comment type="function">
    <text evidence="1 4">Plays an essential role in viral RNA synthesis and also a role in suppressing innate immune signaling.</text>
</comment>
<comment type="subunit">
    <text evidence="1 4 5">Homooligomer. Homomultimerization via the coiled coil domain is a prerequisite for binding to L. Found in a trimeric complex in which VP35 bridges L and the nucleoprotein (By similarity). Interacts with NP (PubMed:28566377, PubMed:28659479). Disrupts innate immune signaling in infected host cell (By similarity).</text>
</comment>
<comment type="subcellular location">
    <subcellularLocation>
        <location evidence="1">Virion</location>
    </subcellularLocation>
    <subcellularLocation>
        <location evidence="1">Host cytoplasm</location>
    </subcellularLocation>
</comment>
<comment type="similarity">
    <text evidence="3 6">Belongs to the filoviridae polymerase cofactor VP35 family.</text>
</comment>
<organism>
    <name type="scientific">Lake Victoria marburgvirus (strain Ozolin-75)</name>
    <name type="common">MARV</name>
    <name type="synonym">Marburg virus (strain South Africa/Ozolin/1975)</name>
    <dbReference type="NCBI Taxonomy" id="482820"/>
    <lineage>
        <taxon>Viruses</taxon>
        <taxon>Riboviria</taxon>
        <taxon>Orthornavirae</taxon>
        <taxon>Negarnaviricota</taxon>
        <taxon>Haploviricotina</taxon>
        <taxon>Monjiviricetes</taxon>
        <taxon>Mononegavirales</taxon>
        <taxon>Filoviridae</taxon>
        <taxon>Orthomarburgvirus</taxon>
        <taxon>Orthomarburgvirus marburgense</taxon>
    </lineage>
</organism>
<proteinExistence type="evidence at protein level"/>
<dbReference type="EMBL" id="AF005730">
    <property type="protein sequence ID" value="AAC40455.1"/>
    <property type="molecule type" value="Genomic_RNA"/>
</dbReference>
<dbReference type="EMBL" id="AY358025">
    <property type="protein sequence ID" value="AAQ55256.1"/>
    <property type="molecule type" value="Genomic_RNA"/>
</dbReference>
<dbReference type="PDB" id="5F5O">
    <property type="method" value="X-ray"/>
    <property type="resolution" value="2.20 A"/>
    <property type="chains" value="B/D/F=1-29"/>
</dbReference>
<dbReference type="PDB" id="5XSQ">
    <property type="method" value="X-ray"/>
    <property type="resolution" value="2.60 A"/>
    <property type="chains" value="B/D/F=1-28"/>
</dbReference>
<dbReference type="PDBsum" id="5F5O"/>
<dbReference type="PDBsum" id="5XSQ"/>
<dbReference type="SMR" id="Q6UY68"/>
<dbReference type="Proteomes" id="UP000000838">
    <property type="component" value="Genome"/>
</dbReference>
<dbReference type="GO" id="GO:0030430">
    <property type="term" value="C:host cell cytoplasm"/>
    <property type="evidence" value="ECO:0007669"/>
    <property type="project" value="UniProtKB-SubCell"/>
</dbReference>
<dbReference type="GO" id="GO:0044423">
    <property type="term" value="C:virion component"/>
    <property type="evidence" value="ECO:0007669"/>
    <property type="project" value="UniProtKB-KW"/>
</dbReference>
<dbReference type="CDD" id="cd21030">
    <property type="entry name" value="V35-RBD_P-protein-C_like"/>
    <property type="match status" value="1"/>
</dbReference>
<dbReference type="FunFam" id="2.10.10.70:FF:000001">
    <property type="entry name" value="Polymerase cofactor VP35"/>
    <property type="match status" value="1"/>
</dbReference>
<dbReference type="Gene3D" id="2.10.10.70">
    <property type="entry name" value="Filoviridae VP35, C-terminal inhibitory domain, beta-sheet subdomain"/>
    <property type="match status" value="1"/>
</dbReference>
<dbReference type="Gene3D" id="1.10.8.950">
    <property type="entry name" value="Filoviridae VP35, C-terminal inhibitory domain, helical subdomain"/>
    <property type="match status" value="1"/>
</dbReference>
<dbReference type="InterPro" id="IPR002953">
    <property type="entry name" value="Filo_VP35"/>
</dbReference>
<dbReference type="InterPro" id="IPR031163">
    <property type="entry name" value="VP35_IID"/>
</dbReference>
<dbReference type="InterPro" id="IPR043061">
    <property type="entry name" value="VP35_IID_b-sht"/>
</dbReference>
<dbReference type="InterPro" id="IPR043060">
    <property type="entry name" value="VP35_IID_hlx"/>
</dbReference>
<dbReference type="Pfam" id="PF02097">
    <property type="entry name" value="Filo_VP35"/>
    <property type="match status" value="1"/>
</dbReference>
<dbReference type="PIRSF" id="PIRSF018326">
    <property type="entry name" value="VP35_FiloV"/>
    <property type="match status" value="1"/>
</dbReference>
<dbReference type="PRINTS" id="PR01240">
    <property type="entry name" value="FILOVP35"/>
</dbReference>
<dbReference type="PROSITE" id="PS51735">
    <property type="entry name" value="VP35_IID"/>
    <property type="match status" value="1"/>
</dbReference>
<evidence type="ECO:0000250" key="1">
    <source>
        <dbReference type="UniProtKB" id="P35259"/>
    </source>
</evidence>
<evidence type="ECO:0000255" key="2"/>
<evidence type="ECO:0000255" key="3">
    <source>
        <dbReference type="PROSITE-ProRule" id="PRU01071"/>
    </source>
</evidence>
<evidence type="ECO:0000269" key="4">
    <source>
    </source>
</evidence>
<evidence type="ECO:0000269" key="5">
    <source>
    </source>
</evidence>
<evidence type="ECO:0000305" key="6"/>
<evidence type="ECO:0007744" key="7">
    <source>
        <dbReference type="PDB" id="5F5O"/>
    </source>
</evidence>
<evidence type="ECO:0007744" key="8">
    <source>
        <dbReference type="PDB" id="5XSQ"/>
    </source>
</evidence>
<evidence type="ECO:0007829" key="9">
    <source>
        <dbReference type="PDB" id="5F5O"/>
    </source>
</evidence>
<protein>
    <recommendedName>
        <fullName>Polymerase cofactor VP35</fullName>
    </recommendedName>
    <alternativeName>
        <fullName>Marburg VP35</fullName>
        <shortName>mVP35</shortName>
    </alternativeName>
</protein>
<gene>
    <name type="primary">VP35</name>
</gene>
<feature type="chain" id="PRO_0000314996" description="Polymerase cofactor VP35">
    <location>
        <begin position="1"/>
        <end position="329"/>
    </location>
</feature>
<feature type="domain" description="VP35 IID" evidence="3">
    <location>
        <begin position="204"/>
        <end position="329"/>
    </location>
</feature>
<feature type="coiled-coil region" evidence="2">
    <location>
        <begin position="70"/>
        <end position="120"/>
    </location>
</feature>
<feature type="sequence variant" description="In strain: Isolate Sanchez.">
    <original>P</original>
    <variation>L</variation>
    <location>
        <position position="49"/>
    </location>
</feature>
<feature type="sequence variant" description="In strain: Isolate Sanchez.">
    <original>L</original>
    <variation>H</variation>
    <location>
        <position position="72"/>
    </location>
</feature>
<feature type="sequence variant" description="In strain: Isolate Sanchez.">
    <original>IS</original>
    <variation>TL</variation>
    <location>
        <begin position="83"/>
        <end position="84"/>
    </location>
</feature>
<feature type="turn" evidence="9">
    <location>
        <begin position="4"/>
        <end position="6"/>
    </location>
</feature>
<feature type="helix" evidence="9">
    <location>
        <begin position="7"/>
        <end position="15"/>
    </location>
</feature>
<feature type="helix" evidence="9">
    <location>
        <begin position="22"/>
        <end position="25"/>
    </location>
</feature>
<reference key="1">
    <citation type="journal article" date="1998" name="Virology">
        <title>Variation in the glycoprotein and VP35 genes of Marburg virus strains.</title>
        <authorList>
            <person name="Sanchez A."/>
            <person name="Trappier S.G."/>
            <person name="Stroeher U."/>
            <person name="Nichol S.T."/>
            <person name="Bowen M.D."/>
            <person name="Feldmann H."/>
        </authorList>
    </citation>
    <scope>NUCLEOTIDE SEQUENCE [GENOMIC RNA]</scope>
    <source>
        <strain>Isolate Sanchez</strain>
    </source>
</reference>
<reference key="2">
    <citation type="submission" date="2003-08" db="EMBL/GenBank/DDBJ databases">
        <authorList>
            <person name="Bowen M.D."/>
            <person name="Thurman K."/>
            <person name="Minor E."/>
            <person name="Ibrahim M.S."/>
            <person name="Meyer R.F."/>
            <person name="Malfatti S.A."/>
            <person name="Do L.H."/>
            <person name="Smith K.L."/>
            <person name="McCready P.M."/>
            <person name="Chain P.S.G."/>
        </authorList>
    </citation>
    <scope>NUCLEOTIDE SEQUENCE [GENOMIC RNA]</scope>
</reference>
<reference evidence="8" key="3">
    <citation type="journal article" date="2017" name="J. Virol.">
        <title>Crystal Structure of the Marburg Virus Nucleoprotein Core Domain Chaperoned by a VP35 Peptide Reveals a Conserved Drug Target for Filovirus.</title>
        <authorList>
            <person name="Zhu T."/>
            <person name="Song H."/>
            <person name="Peng R."/>
            <person name="Shi Y."/>
            <person name="Qi J."/>
            <person name="Gao G.F."/>
        </authorList>
    </citation>
    <scope>X-RAY CRYSTALLOGRAPHY (2.60 ANGSTROMS) OF 1-28</scope>
    <scope>INTERACTION WITH NP</scope>
</reference>
<reference evidence="7" key="4">
    <citation type="journal article" date="2017" name="J. Virol.">
        <title>Structural Insight into Nucleoprotein Conformation Change Chaperoned by VP35 Peptide in Marburg Virus.</title>
        <authorList>
            <person name="Liu B."/>
            <person name="Dong S."/>
            <person name="Li G."/>
            <person name="Wang W."/>
            <person name="Liu X."/>
            <person name="Wang Y."/>
            <person name="Yang C."/>
            <person name="Rao Z."/>
            <person name="Guo Y."/>
        </authorList>
    </citation>
    <scope>X-RAY CRYSTALLOGRAPHY (2.20 ANGSTROMS) OF 1-29</scope>
    <scope>INTERACTION WITH NP</scope>
    <scope>FUNCTION</scope>
</reference>
<sequence>MWDSSYMQQVSEGLMTGKVPIDQVFGANPLEKLYKRRKPKGTVGLQCSPCLMSKATSTDDIIWDQLIVKKTLADLLIPINRQISDIQSTLSEVTTRVHEIERQLHEITPVLKMGRTLEAISKGMSEMLAKYDHLVISTGRTTAPAAAFDAYLNEHGVPPPQPAIFKDLGVAQQACSKGTMVKNATTDAADKMSKVLELSEETFSKPNLSAKDLALLLFTHLPGNNTPFHILAQVLSKIAYKSGKSGAFLDAFHQILSEGENAQAALTRLSRTFDAFLGVVPPVIRVKNFQTVPRPCQKSLRAVPPNPTIDKGWVCVYSSEQGETRALKI</sequence>
<keyword id="KW-0002">3D-structure</keyword>
<keyword id="KW-0175">Coiled coil</keyword>
<keyword id="KW-1035">Host cytoplasm</keyword>
<keyword id="KW-0804">Transcription</keyword>
<keyword id="KW-0693">Viral RNA replication</keyword>
<keyword id="KW-0946">Virion</keyword>